<protein>
    <recommendedName>
        <fullName>Ribose-phosphate pyrophosphokinase 4</fullName>
        <ecNumber>2.7.6.1</ecNumber>
    </recommendedName>
    <alternativeName>
        <fullName>Phosphoribosyl pyrophosphate synthase 4</fullName>
    </alternativeName>
</protein>
<evidence type="ECO:0000255" key="1"/>
<evidence type="ECO:0000269" key="2">
    <source>
    </source>
</evidence>
<evidence type="ECO:0000269" key="3">
    <source>
    </source>
</evidence>
<evidence type="ECO:0000269" key="4">
    <source>
    </source>
</evidence>
<evidence type="ECO:0000269" key="5">
    <source>
    </source>
</evidence>
<evidence type="ECO:0000305" key="6"/>
<keyword id="KW-0067">ATP-binding</keyword>
<keyword id="KW-0963">Cytoplasm</keyword>
<keyword id="KW-0418">Kinase</keyword>
<keyword id="KW-0460">Magnesium</keyword>
<keyword id="KW-0479">Metal-binding</keyword>
<keyword id="KW-0545">Nucleotide biosynthesis</keyword>
<keyword id="KW-0547">Nucleotide-binding</keyword>
<keyword id="KW-1185">Reference proteome</keyword>
<keyword id="KW-0808">Transferase</keyword>
<proteinExistence type="evidence at protein level"/>
<comment type="function">
    <text evidence="2 5">5-phosphoribose 1-diphosphate synthase involved in nucleotide, histidine, and tryptophan biosynthesis. Active in heteromultimeric complexes with other 5-phosphoribose 1-diphosphate synthases (PRS2, PRS3, PRS4 and PRS5).</text>
</comment>
<comment type="catalytic activity">
    <reaction evidence="2 5">
        <text>D-ribose 5-phosphate + ATP = 5-phospho-alpha-D-ribose 1-diphosphate + AMP + H(+)</text>
        <dbReference type="Rhea" id="RHEA:15609"/>
        <dbReference type="ChEBI" id="CHEBI:15378"/>
        <dbReference type="ChEBI" id="CHEBI:30616"/>
        <dbReference type="ChEBI" id="CHEBI:58017"/>
        <dbReference type="ChEBI" id="CHEBI:78346"/>
        <dbReference type="ChEBI" id="CHEBI:456215"/>
        <dbReference type="EC" id="2.7.6.1"/>
    </reaction>
</comment>
<comment type="pathway">
    <text>Metabolic intermediate biosynthesis; 5-phospho-alpha-D-ribose 1-diphosphate biosynthesis; 5-phospho-alpha-D-ribose 1-diphosphate from D-ribose 5-phosphate (route I): step 1/1.</text>
</comment>
<comment type="interaction">
    <interactant intactId="EBI-9882">
        <id>P38063</id>
    </interactant>
    <interactant intactId="EBI-9869">
        <id>P32895</id>
        <label>PRS1</label>
    </interactant>
    <organismsDiffer>false</organismsDiffer>
    <experiments>4</experiments>
</comment>
<comment type="interaction">
    <interactant intactId="EBI-9882">
        <id>P38063</id>
    </interactant>
    <interactant intactId="EBI-9877">
        <id>P38689</id>
        <label>PRS3</label>
    </interactant>
    <organismsDiffer>false</organismsDiffer>
    <experiments>2</experiments>
</comment>
<comment type="interaction">
    <interactant intactId="EBI-9882">
        <id>P38063</id>
    </interactant>
    <interactant intactId="EBI-9886">
        <id>Q12265</id>
        <label>PRS5</label>
    </interactant>
    <organismsDiffer>false</organismsDiffer>
    <experiments>3</experiments>
</comment>
<comment type="subcellular location">
    <subcellularLocation>
        <location evidence="3">Cytoplasm</location>
    </subcellularLocation>
</comment>
<comment type="miscellaneous">
    <text evidence="4">Present with 5280 molecules/cell in log phase SD medium.</text>
</comment>
<comment type="similarity">
    <text evidence="6">Belongs to the ribose-phosphate pyrophosphokinase family.</text>
</comment>
<comment type="sequence caution" evidence="6">
    <conflict type="erroneous initiation">
        <sequence resource="EMBL-CDS" id="CAA84888"/>
    </conflict>
</comment>
<comment type="sequence caution" evidence="6">
    <conflict type="erroneous initiation">
        <sequence resource="EMBL-CDS" id="CAC04170"/>
    </conflict>
</comment>
<feature type="chain" id="PRO_0000141089" description="Ribose-phosphate pyrophosphokinase 4">
    <location>
        <begin position="1"/>
        <end position="326"/>
    </location>
</feature>
<feature type="binding site" evidence="1">
    <location>
        <position position="140"/>
    </location>
    <ligand>
        <name>Mg(2+)</name>
        <dbReference type="ChEBI" id="CHEBI:18420"/>
    </ligand>
</feature>
<feature type="binding site" evidence="1">
    <location>
        <position position="142"/>
    </location>
    <ligand>
        <name>Mg(2+)</name>
        <dbReference type="ChEBI" id="CHEBI:18420"/>
    </ligand>
</feature>
<feature type="binding site" evidence="1">
    <location>
        <position position="151"/>
    </location>
    <ligand>
        <name>Mg(2+)</name>
        <dbReference type="ChEBI" id="CHEBI:18420"/>
    </ligand>
</feature>
<feature type="binding site" evidence="1">
    <location>
        <position position="155"/>
    </location>
    <ligand>
        <name>Mg(2+)</name>
        <dbReference type="ChEBI" id="CHEBI:18420"/>
    </ligand>
</feature>
<feature type="sequence conflict" description="In Ref. 2; CAA84888." evidence="6" ref="2">
    <original>K</original>
    <variation>Q</variation>
    <location>
        <position position="90"/>
    </location>
</feature>
<feature type="sequence conflict" description="In Ref. 2; CAA84888." evidence="6" ref="2">
    <original>T</original>
    <variation>AR</variation>
    <location>
        <position position="169"/>
    </location>
</feature>
<organism>
    <name type="scientific">Saccharomyces cerevisiae (strain ATCC 204508 / S288c)</name>
    <name type="common">Baker's yeast</name>
    <dbReference type="NCBI Taxonomy" id="559292"/>
    <lineage>
        <taxon>Eukaryota</taxon>
        <taxon>Fungi</taxon>
        <taxon>Dikarya</taxon>
        <taxon>Ascomycota</taxon>
        <taxon>Saccharomycotina</taxon>
        <taxon>Saccharomycetes</taxon>
        <taxon>Saccharomycetales</taxon>
        <taxon>Saccharomycetaceae</taxon>
        <taxon>Saccharomyces</taxon>
    </lineage>
</organism>
<name>KPR4_YEAST</name>
<accession>P38063</accession>
<accession>D6VPT3</accession>
<accession>Q9HGQ6</accession>
<sequence>MNSESREDMAINSIKLLAGNSHPDLAEQISKKLGIPLSKVGVYQYSNKETSVTIGESLRDEDVYIIQTGIGEQEINDFLMELLILIHACKIASARKITTVIPNFPYARQDKKDKSRAPITAKLVANLLQTAGADHVITMDLHASQIQGFFHIPVDNLYAEPSVLNYIRTKTDFDNAILVSPDAGGAKRVAALADKLDLNFALIHKERQKANEVSKMVLVGDVTNKSCLLVDDMADTCGTLVKACDTLMEHGAKEVIAIVTHGIFSGSAREKLRNSRLSRIVCTNTVPVDLDLPIADQIDISPTFAEAIRRLHNGESVSYLFTHAPV</sequence>
<gene>
    <name type="primary">PRS4</name>
    <name type="synonym">PRPS4</name>
    <name type="ordered locus">YBL068W</name>
    <name type="ORF">YBL0619</name>
</gene>
<reference key="1">
    <citation type="journal article" date="2004" name="J. Biol. Chem.">
        <title>Heterooligomeric phosphoribosyl diphosphate synthase of Saccharomyces cerevisiae: combinatorial expression of the five PRS genes in Escherichia coli.</title>
        <authorList>
            <person name="Hove-Jensen B."/>
        </authorList>
    </citation>
    <scope>NUCLEOTIDE SEQUENCE [GENOMIC DNA]</scope>
    <scope>FUNCTION</scope>
    <scope>ENZYME ACTIVITY</scope>
</reference>
<reference key="2">
    <citation type="journal article" date="1994" name="EMBO J.">
        <title>Complete DNA sequence of yeast chromosome II.</title>
        <authorList>
            <person name="Feldmann H."/>
            <person name="Aigle M."/>
            <person name="Aljinovic G."/>
            <person name="Andre B."/>
            <person name="Baclet M.C."/>
            <person name="Barthe C."/>
            <person name="Baur A."/>
            <person name="Becam A.-M."/>
            <person name="Biteau N."/>
            <person name="Boles E."/>
            <person name="Brandt T."/>
            <person name="Brendel M."/>
            <person name="Brueckner M."/>
            <person name="Bussereau F."/>
            <person name="Christiansen C."/>
            <person name="Contreras R."/>
            <person name="Crouzet M."/>
            <person name="Cziepluch C."/>
            <person name="Demolis N."/>
            <person name="Delaveau T."/>
            <person name="Doignon F."/>
            <person name="Domdey H."/>
            <person name="Duesterhus S."/>
            <person name="Dubois E."/>
            <person name="Dujon B."/>
            <person name="El Bakkoury M."/>
            <person name="Entian K.-D."/>
            <person name="Feuermann M."/>
            <person name="Fiers W."/>
            <person name="Fobo G.M."/>
            <person name="Fritz C."/>
            <person name="Gassenhuber J."/>
            <person name="Glansdorff N."/>
            <person name="Goffeau A."/>
            <person name="Grivell L.A."/>
            <person name="de Haan M."/>
            <person name="Hein C."/>
            <person name="Herbert C.J."/>
            <person name="Hollenberg C.P."/>
            <person name="Holmstroem K."/>
            <person name="Jacq C."/>
            <person name="Jacquet M."/>
            <person name="Jauniaux J.-C."/>
            <person name="Jonniaux J.-L."/>
            <person name="Kallesoee T."/>
            <person name="Kiesau P."/>
            <person name="Kirchrath L."/>
            <person name="Koetter P."/>
            <person name="Korol S."/>
            <person name="Liebl S."/>
            <person name="Logghe M."/>
            <person name="Lohan A.J.E."/>
            <person name="Louis E.J."/>
            <person name="Li Z.Y."/>
            <person name="Maat M.J."/>
            <person name="Mallet L."/>
            <person name="Mannhaupt G."/>
            <person name="Messenguy F."/>
            <person name="Miosga T."/>
            <person name="Molemans F."/>
            <person name="Mueller S."/>
            <person name="Nasr F."/>
            <person name="Obermaier B."/>
            <person name="Perea J."/>
            <person name="Pierard A."/>
            <person name="Piravandi E."/>
            <person name="Pohl F.M."/>
            <person name="Pohl T.M."/>
            <person name="Potier S."/>
            <person name="Proft M."/>
            <person name="Purnelle B."/>
            <person name="Ramezani Rad M."/>
            <person name="Rieger M."/>
            <person name="Rose M."/>
            <person name="Schaaff-Gerstenschlaeger I."/>
            <person name="Scherens B."/>
            <person name="Schwarzlose C."/>
            <person name="Skala J."/>
            <person name="Slonimski P.P."/>
            <person name="Smits P.H.M."/>
            <person name="Souciet J.-L."/>
            <person name="Steensma H.Y."/>
            <person name="Stucka R."/>
            <person name="Urrestarazu L.A."/>
            <person name="van der Aart Q.J.M."/>
            <person name="Van Dyck L."/>
            <person name="Vassarotti A."/>
            <person name="Vetter I."/>
            <person name="Vierendeels F."/>
            <person name="Vissers S."/>
            <person name="Wagner G."/>
            <person name="de Wergifosse P."/>
            <person name="Wolfe K.H."/>
            <person name="Zagulski M."/>
            <person name="Zimmermann F.K."/>
            <person name="Mewes H.-W."/>
            <person name="Kleine K."/>
        </authorList>
    </citation>
    <scope>NUCLEOTIDE SEQUENCE [LARGE SCALE GENOMIC DNA]</scope>
    <source>
        <strain>ATCC 204508 / S288c</strain>
    </source>
</reference>
<reference key="3">
    <citation type="journal article" date="2014" name="G3 (Bethesda)">
        <title>The reference genome sequence of Saccharomyces cerevisiae: Then and now.</title>
        <authorList>
            <person name="Engel S.R."/>
            <person name="Dietrich F.S."/>
            <person name="Fisk D.G."/>
            <person name="Binkley G."/>
            <person name="Balakrishnan R."/>
            <person name="Costanzo M.C."/>
            <person name="Dwight S.S."/>
            <person name="Hitz B.C."/>
            <person name="Karra K."/>
            <person name="Nash R.S."/>
            <person name="Weng S."/>
            <person name="Wong E.D."/>
            <person name="Lloyd P."/>
            <person name="Skrzypek M.S."/>
            <person name="Miyasato S.R."/>
            <person name="Simison M."/>
            <person name="Cherry J.M."/>
        </authorList>
    </citation>
    <scope>GENOME REANNOTATION</scope>
    <scope>SEQUENCE REVISION TO 90 AND 169</scope>
    <source>
        <strain>ATCC 204508 / S288c</strain>
    </source>
</reference>
<reference key="4">
    <citation type="journal article" date="1999" name="J. Biol. Chem.">
        <title>Genetic analysis and enzyme activity suggest the existence of more than one minimal functional unit capable of synthesizing phosphoribosyl pyrophosphate in Saccharomyces cerevisiae.</title>
        <authorList>
            <person name="Hernando Y."/>
            <person name="Carter A.T."/>
            <person name="Parr A."/>
            <person name="Hove-Jensen B."/>
            <person name="Schweizer M."/>
        </authorList>
    </citation>
    <scope>FUNCTION</scope>
    <scope>ENZYME ACTIVITY</scope>
</reference>
<reference key="5">
    <citation type="journal article" date="2003" name="Nature">
        <title>Sequencing and comparison of yeast species to identify genes and regulatory elements.</title>
        <authorList>
            <person name="Kellis M."/>
            <person name="Patterson N."/>
            <person name="Endrizzi M."/>
            <person name="Birren B.W."/>
            <person name="Lander E.S."/>
        </authorList>
    </citation>
    <scope>IDENTIFICATION OF PROBABLE INITIATION SITE</scope>
</reference>
<reference key="6">
    <citation type="journal article" date="2003" name="Nature">
        <title>Global analysis of protein localization in budding yeast.</title>
        <authorList>
            <person name="Huh W.-K."/>
            <person name="Falvo J.V."/>
            <person name="Gerke L.C."/>
            <person name="Carroll A.S."/>
            <person name="Howson R.W."/>
            <person name="Weissman J.S."/>
            <person name="O'Shea E.K."/>
        </authorList>
    </citation>
    <scope>SUBCELLULAR LOCATION [LARGE SCALE ANALYSIS]</scope>
</reference>
<reference key="7">
    <citation type="journal article" date="2003" name="Nature">
        <title>Global analysis of protein expression in yeast.</title>
        <authorList>
            <person name="Ghaemmaghami S."/>
            <person name="Huh W.-K."/>
            <person name="Bower K."/>
            <person name="Howson R.W."/>
            <person name="Belle A."/>
            <person name="Dephoure N."/>
            <person name="O'Shea E.K."/>
            <person name="Weissman J.S."/>
        </authorList>
    </citation>
    <scope>LEVEL OF PROTEIN EXPRESSION [LARGE SCALE ANALYSIS]</scope>
</reference>
<dbReference type="EC" id="2.7.6.1"/>
<dbReference type="EMBL" id="AJ245726">
    <property type="protein sequence ID" value="CAC04170.1"/>
    <property type="status" value="ALT_INIT"/>
    <property type="molecule type" value="Genomic_DNA"/>
</dbReference>
<dbReference type="EMBL" id="Z35829">
    <property type="protein sequence ID" value="CAA84888.1"/>
    <property type="status" value="ALT_INIT"/>
    <property type="molecule type" value="Genomic_DNA"/>
</dbReference>
<dbReference type="EMBL" id="BK006936">
    <property type="protein sequence ID" value="DAA07053.2"/>
    <property type="molecule type" value="Genomic_DNA"/>
</dbReference>
<dbReference type="PIR" id="S45804">
    <property type="entry name" value="S45804"/>
</dbReference>
<dbReference type="RefSeq" id="NP_009485.3">
    <property type="nucleotide sequence ID" value="NM_001178308.2"/>
</dbReference>
<dbReference type="SMR" id="P38063"/>
<dbReference type="BioGRID" id="32632">
    <property type="interactions" value="80"/>
</dbReference>
<dbReference type="DIP" id="DIP-3945N"/>
<dbReference type="FunCoup" id="P38063">
    <property type="interactions" value="608"/>
</dbReference>
<dbReference type="IntAct" id="P38063">
    <property type="interactions" value="5"/>
</dbReference>
<dbReference type="MINT" id="P38063"/>
<dbReference type="STRING" id="4932.YBL068W"/>
<dbReference type="iPTMnet" id="P38063"/>
<dbReference type="PaxDb" id="4932-YBL068W"/>
<dbReference type="PeptideAtlas" id="P38063"/>
<dbReference type="EnsemblFungi" id="YBL068W_mRNA">
    <property type="protein sequence ID" value="YBL068W"/>
    <property type="gene ID" value="YBL068W"/>
</dbReference>
<dbReference type="GeneID" id="852211"/>
<dbReference type="KEGG" id="sce:YBL068W"/>
<dbReference type="AGR" id="SGD:S000000164"/>
<dbReference type="SGD" id="S000000164">
    <property type="gene designation" value="PRS4"/>
</dbReference>
<dbReference type="VEuPathDB" id="FungiDB:YBL068W"/>
<dbReference type="eggNOG" id="KOG1448">
    <property type="taxonomic scope" value="Eukaryota"/>
</dbReference>
<dbReference type="GeneTree" id="ENSGT00950000182803"/>
<dbReference type="HOGENOM" id="CLU_033546_4_0_1"/>
<dbReference type="InParanoid" id="P38063"/>
<dbReference type="OMA" id="LLPEHKC"/>
<dbReference type="OrthoDB" id="413572at2759"/>
<dbReference type="BioCyc" id="YEAST:YBL068W-MONOMER"/>
<dbReference type="Reactome" id="R-SCE-73843">
    <property type="pathway name" value="5-Phosphoribose 1-diphosphate biosynthesis"/>
</dbReference>
<dbReference type="UniPathway" id="UPA00087">
    <property type="reaction ID" value="UER00172"/>
</dbReference>
<dbReference type="BioGRID-ORCS" id="852211">
    <property type="hits" value="1 hit in 10 CRISPR screens"/>
</dbReference>
<dbReference type="PRO" id="PR:P38063"/>
<dbReference type="Proteomes" id="UP000002311">
    <property type="component" value="Chromosome II"/>
</dbReference>
<dbReference type="RNAct" id="P38063">
    <property type="molecule type" value="protein"/>
</dbReference>
<dbReference type="GO" id="GO:0005737">
    <property type="term" value="C:cytoplasm"/>
    <property type="evidence" value="ECO:0007005"/>
    <property type="project" value="SGD"/>
</dbReference>
<dbReference type="GO" id="GO:0002189">
    <property type="term" value="C:ribose phosphate diphosphokinase complex"/>
    <property type="evidence" value="ECO:0000314"/>
    <property type="project" value="SGD"/>
</dbReference>
<dbReference type="GO" id="GO:0005524">
    <property type="term" value="F:ATP binding"/>
    <property type="evidence" value="ECO:0007669"/>
    <property type="project" value="UniProtKB-KW"/>
</dbReference>
<dbReference type="GO" id="GO:0016301">
    <property type="term" value="F:kinase activity"/>
    <property type="evidence" value="ECO:0007669"/>
    <property type="project" value="UniProtKB-KW"/>
</dbReference>
<dbReference type="GO" id="GO:0000287">
    <property type="term" value="F:magnesium ion binding"/>
    <property type="evidence" value="ECO:0007669"/>
    <property type="project" value="InterPro"/>
</dbReference>
<dbReference type="GO" id="GO:0004749">
    <property type="term" value="F:ribose phosphate diphosphokinase activity"/>
    <property type="evidence" value="ECO:0007669"/>
    <property type="project" value="UniProtKB-EC"/>
</dbReference>
<dbReference type="GO" id="GO:0006015">
    <property type="term" value="P:5-phosphoribose 1-diphosphate biosynthetic process"/>
    <property type="evidence" value="ECO:0000315"/>
    <property type="project" value="SGD"/>
</dbReference>
<dbReference type="GO" id="GO:0006164">
    <property type="term" value="P:purine nucleotide biosynthetic process"/>
    <property type="evidence" value="ECO:0000318"/>
    <property type="project" value="GO_Central"/>
</dbReference>
<dbReference type="GO" id="GO:0009156">
    <property type="term" value="P:ribonucleoside monophosphate biosynthetic process"/>
    <property type="evidence" value="ECO:0007669"/>
    <property type="project" value="InterPro"/>
</dbReference>
<dbReference type="CDD" id="cd06223">
    <property type="entry name" value="PRTases_typeI"/>
    <property type="match status" value="1"/>
</dbReference>
<dbReference type="FunFam" id="3.40.50.2020:FF:000005">
    <property type="entry name" value="Ribose-phosphate pyrophosphokinase 1"/>
    <property type="match status" value="1"/>
</dbReference>
<dbReference type="FunFam" id="3.40.50.2020:FF:000014">
    <property type="entry name" value="Ribose-phosphate pyrophosphokinase 1"/>
    <property type="match status" value="1"/>
</dbReference>
<dbReference type="Gene3D" id="3.40.50.2020">
    <property type="match status" value="2"/>
</dbReference>
<dbReference type="InterPro" id="IPR000842">
    <property type="entry name" value="PRib_PP_synth_CS"/>
</dbReference>
<dbReference type="InterPro" id="IPR029099">
    <property type="entry name" value="Pribosyltran_N"/>
</dbReference>
<dbReference type="InterPro" id="IPR000836">
    <property type="entry name" value="PRibTrfase_dom"/>
</dbReference>
<dbReference type="InterPro" id="IPR029057">
    <property type="entry name" value="PRTase-like"/>
</dbReference>
<dbReference type="InterPro" id="IPR005946">
    <property type="entry name" value="Rib-P_diPkinase"/>
</dbReference>
<dbReference type="NCBIfam" id="NF002320">
    <property type="entry name" value="PRK01259.1"/>
    <property type="match status" value="1"/>
</dbReference>
<dbReference type="NCBIfam" id="TIGR01251">
    <property type="entry name" value="ribP_PPkin"/>
    <property type="match status" value="1"/>
</dbReference>
<dbReference type="PANTHER" id="PTHR10210">
    <property type="entry name" value="RIBOSE-PHOSPHATE DIPHOSPHOKINASE FAMILY MEMBER"/>
    <property type="match status" value="1"/>
</dbReference>
<dbReference type="PANTHER" id="PTHR10210:SF32">
    <property type="entry name" value="RIBOSE-PHOSPHATE PYROPHOSPHOKINASE 2"/>
    <property type="match status" value="1"/>
</dbReference>
<dbReference type="Pfam" id="PF14572">
    <property type="entry name" value="Pribosyl_synth"/>
    <property type="match status" value="1"/>
</dbReference>
<dbReference type="Pfam" id="PF13793">
    <property type="entry name" value="Pribosyltran_N"/>
    <property type="match status" value="1"/>
</dbReference>
<dbReference type="SMART" id="SM01400">
    <property type="entry name" value="Pribosyltran_N"/>
    <property type="match status" value="1"/>
</dbReference>
<dbReference type="SUPFAM" id="SSF53271">
    <property type="entry name" value="PRTase-like"/>
    <property type="match status" value="1"/>
</dbReference>
<dbReference type="PROSITE" id="PS00114">
    <property type="entry name" value="PRPP_SYNTHASE"/>
    <property type="match status" value="1"/>
</dbReference>